<organism>
    <name type="scientific">Pseudomonas aeruginosa</name>
    <dbReference type="NCBI Taxonomy" id="287"/>
    <lineage>
        <taxon>Bacteria</taxon>
        <taxon>Pseudomonadati</taxon>
        <taxon>Pseudomonadota</taxon>
        <taxon>Gammaproteobacteria</taxon>
        <taxon>Pseudomonadales</taxon>
        <taxon>Pseudomonadaceae</taxon>
        <taxon>Pseudomonas</taxon>
    </lineage>
</organism>
<reference key="1">
    <citation type="journal article" date="1992" name="Mol. Microbiol.">
        <title>Phylogeny of LCR-1 and OXA-5 with class A and class D beta-lactamases.</title>
        <authorList>
            <person name="Couture F."/>
            <person name="Lachapelle J."/>
            <person name="Levesque R.C."/>
        </authorList>
    </citation>
    <scope>NUCLEOTIDE SEQUENCE [GENOMIC DNA]</scope>
    <source>
        <strain>76072601</strain>
        <transposon>Tn1406</transposon>
    </source>
</reference>
<name>BLO5_PSEAI</name>
<protein>
    <recommendedName>
        <fullName>Beta-lactamase OXA-5</fullName>
        <ecNumber>3.5.2.6</ecNumber>
    </recommendedName>
</protein>
<dbReference type="EC" id="3.5.2.6"/>
<dbReference type="EMBL" id="X58272">
    <property type="protein sequence ID" value="CAA41211.1"/>
    <property type="molecule type" value="Genomic_DNA"/>
</dbReference>
<dbReference type="PIR" id="S22684">
    <property type="entry name" value="S22684"/>
</dbReference>
<dbReference type="RefSeq" id="WP_032488483.1">
    <property type="nucleotide sequence ID" value="NG_049776.1"/>
</dbReference>
<dbReference type="SMR" id="Q00982"/>
<dbReference type="CARD" id="ARO:3001400">
    <property type="molecule name" value="OXA-5"/>
    <property type="mechanism identifier" value="ARO:0001004"/>
    <property type="mechanism name" value="antibiotic inactivation"/>
</dbReference>
<dbReference type="KEGG" id="ag:CAA41211"/>
<dbReference type="GO" id="GO:0005886">
    <property type="term" value="C:plasma membrane"/>
    <property type="evidence" value="ECO:0007669"/>
    <property type="project" value="TreeGrafter"/>
</dbReference>
<dbReference type="GO" id="GO:0008800">
    <property type="term" value="F:beta-lactamase activity"/>
    <property type="evidence" value="ECO:0007669"/>
    <property type="project" value="UniProtKB-EC"/>
</dbReference>
<dbReference type="GO" id="GO:0008658">
    <property type="term" value="F:penicillin binding"/>
    <property type="evidence" value="ECO:0007669"/>
    <property type="project" value="InterPro"/>
</dbReference>
<dbReference type="GO" id="GO:0017001">
    <property type="term" value="P:antibiotic catabolic process"/>
    <property type="evidence" value="ECO:0007669"/>
    <property type="project" value="InterPro"/>
</dbReference>
<dbReference type="GO" id="GO:0071555">
    <property type="term" value="P:cell wall organization"/>
    <property type="evidence" value="ECO:0007669"/>
    <property type="project" value="TreeGrafter"/>
</dbReference>
<dbReference type="GO" id="GO:0046677">
    <property type="term" value="P:response to antibiotic"/>
    <property type="evidence" value="ECO:0007669"/>
    <property type="project" value="UniProtKB-KW"/>
</dbReference>
<dbReference type="Gene3D" id="3.40.710.10">
    <property type="entry name" value="DD-peptidase/beta-lactamase superfamily"/>
    <property type="match status" value="1"/>
</dbReference>
<dbReference type="InterPro" id="IPR050515">
    <property type="entry name" value="Bact_Transpept/Beta-Lactamase"/>
</dbReference>
<dbReference type="InterPro" id="IPR012338">
    <property type="entry name" value="Beta-lactam/transpept-like"/>
</dbReference>
<dbReference type="InterPro" id="IPR002137">
    <property type="entry name" value="Beta-lactam_class-D_AS"/>
</dbReference>
<dbReference type="InterPro" id="IPR001460">
    <property type="entry name" value="PCN-bd_Tpept"/>
</dbReference>
<dbReference type="NCBIfam" id="NF012161">
    <property type="entry name" value="bla_class_D_main"/>
    <property type="match status" value="1"/>
</dbReference>
<dbReference type="NCBIfam" id="NF040527">
    <property type="entry name" value="blaOXA-5_like"/>
    <property type="match status" value="1"/>
</dbReference>
<dbReference type="PANTHER" id="PTHR30627:SF6">
    <property type="entry name" value="BETA-LACTAMASE YBXI-RELATED"/>
    <property type="match status" value="1"/>
</dbReference>
<dbReference type="PANTHER" id="PTHR30627">
    <property type="entry name" value="PEPTIDOGLYCAN D,D-TRANSPEPTIDASE"/>
    <property type="match status" value="1"/>
</dbReference>
<dbReference type="Pfam" id="PF00905">
    <property type="entry name" value="Transpeptidase"/>
    <property type="match status" value="1"/>
</dbReference>
<dbReference type="SUPFAM" id="SSF56601">
    <property type="entry name" value="beta-lactamase/transpeptidase-like"/>
    <property type="match status" value="1"/>
</dbReference>
<dbReference type="PROSITE" id="PS00337">
    <property type="entry name" value="BETA_LACTAMASE_D"/>
    <property type="match status" value="1"/>
</dbReference>
<feature type="signal peptide" evidence="1">
    <location>
        <begin position="1"/>
        <end position="19"/>
    </location>
</feature>
<feature type="chain" id="PRO_0000017028" description="Beta-lactamase OXA-5">
    <location>
        <begin position="20"/>
        <end position="267"/>
    </location>
</feature>
<feature type="active site" description="Acyl-ester intermediate" evidence="2">
    <location>
        <position position="67"/>
    </location>
</feature>
<feature type="binding site" evidence="1">
    <location>
        <begin position="205"/>
        <end position="207"/>
    </location>
    <ligand>
        <name>substrate</name>
    </ligand>
</feature>
<feature type="modified residue" description="N6-carboxylysine" evidence="1">
    <location>
        <position position="70"/>
    </location>
</feature>
<proteinExistence type="inferred from homology"/>
<accession>Q00982</accession>
<gene>
    <name type="primary">bla</name>
    <name type="synonym">oxa5</name>
</gene>
<comment type="function">
    <text>Hydrolyzes both oxacillin and methicillin.</text>
</comment>
<comment type="catalytic activity">
    <reaction evidence="2">
        <text>a beta-lactam + H2O = a substituted beta-amino acid</text>
        <dbReference type="Rhea" id="RHEA:20401"/>
        <dbReference type="ChEBI" id="CHEBI:15377"/>
        <dbReference type="ChEBI" id="CHEBI:35627"/>
        <dbReference type="ChEBI" id="CHEBI:140347"/>
        <dbReference type="EC" id="3.5.2.6"/>
    </reaction>
</comment>
<comment type="activity regulation">
    <text>Inhibited by clavulanic acid.</text>
</comment>
<comment type="similarity">
    <text evidence="3">Belongs to the class-D beta-lactamase family.</text>
</comment>
<keyword id="KW-0046">Antibiotic resistance</keyword>
<keyword id="KW-0378">Hydrolase</keyword>
<keyword id="KW-0614">Plasmid</keyword>
<keyword id="KW-0732">Signal</keyword>
<evidence type="ECO:0000250" key="1"/>
<evidence type="ECO:0000255" key="2">
    <source>
        <dbReference type="PROSITE-ProRule" id="PRU10103"/>
    </source>
</evidence>
<evidence type="ECO:0000305" key="3"/>
<geneLocation type="plasmid">
    <name>pMG54</name>
</geneLocation>
<sequence>MKTIAAYLVLVFYASTALSESISENLAWNKEFSSESVHGVFVLCKSSSNSCTTNNAARASTAYIPASTFKIPNALIGLETGAIKDERQVFKWDGKPRAMKQWEKDLKLRGAIQVSAVPVFQQIAREVGEIRMQKYLNLFSYGNANIGGGIDKFWLEGQLRISAFNQVKFLESLYLNNLPASKANQLIVKEAIVTEATPEYIVHSKTGYSGVGTESSPGVAWWVGWVEKGTEVYFFAFNMDIDNESKLPSRKSISTKIMASEGIIIGG</sequence>